<keyword id="KW-0010">Activator</keyword>
<keyword id="KW-0963">Cytoplasm</keyword>
<keyword id="KW-0238">DNA-binding</keyword>
<keyword id="KW-0472">Membrane</keyword>
<keyword id="KW-0496">Mitochondrion</keyword>
<keyword id="KW-1000">Mitochondrion outer membrane</keyword>
<keyword id="KW-0539">Nucleus</keyword>
<keyword id="KW-0597">Phosphoprotein</keyword>
<keyword id="KW-1185">Reference proteome</keyword>
<keyword id="KW-0804">Transcription</keyword>
<keyword id="KW-0805">Transcription regulation</keyword>
<sequence length="469" mass="50044">MAEEQDLSEVELSPVGSEEPRCLSPGSAPSLGPDGGGGGGGGSGLRASPGPGELGKVKKEQQDGEADDDKFPVCIREAVSQVLSGYDWTLVPMPVRVNGASKSKPHVKRPMNAFMVWAQAARRKLADQYPHLHNAELSKTLGKLWRLLNESDKRPFIEEAERLRMQHKKDHPDYKYQPRRRKNGKAAQGESECPGGEAEQGGAAAIQAHYKSAHLDHRHPGEGSPMSDGNPEHPSGQSHGPPTPPTTPKTELQSGKADPKRDGRSMGEGGKPHIDFGNVDIGEISHEVMSNMETFDVAELDQYLPPNGHPGHVGSYSAAGYGLGSALAVASGHSAWISKPPGVALPTVSPPGVDAKAQVKTETAGPQGPSHYSDQPSTSQIAYTSLSLPHYGSAFPSISRPQFDYSDHQPSGPYYGHSGQTSGLYSAFSYMGPSQRPLYTAISDPSPSGPQSHSPTHWEQPVYTTLSRP</sequence>
<proteinExistence type="evidence at transcript level"/>
<comment type="function">
    <text evidence="1 3 4">Transcription factor that plays a central role in developing and mature glia (By similarity). Specifically activates expression of myelin genes, during oligodendrocyte (OL) maturation, such as DUSP15 and MYRF, thereby playing a central role in oligodendrocyte maturation and CNS myelination (By similarity). Once induced, MYRF cooperates with SOX10 to implement the myelination program (By similarity). Transcriptional activator of MITF, acting synergistically with PAX3 (By similarity). Transcriptional activator of MBP, via binding to the gene promoter (By similarity).</text>
</comment>
<comment type="subunit">
    <text evidence="3 4">Monomer. Interacts with ARMCX3 at the mitochondrial outer membrane surface. Interacts with PAX3 (By similarity).</text>
</comment>
<comment type="subcellular location">
    <subcellularLocation>
        <location evidence="4">Cytoplasm</location>
    </subcellularLocation>
    <subcellularLocation>
        <location evidence="4">Nucleus</location>
    </subcellularLocation>
    <subcellularLocation>
        <location evidence="4">Mitochondrion outer membrane</location>
        <topology evidence="4">Peripheral membrane protein</topology>
        <orientation evidence="4">Cytoplasmic side</orientation>
    </subcellularLocation>
</comment>
<comment type="domain">
    <text evidence="2">The transactivation domains TAM and TAC (for transactivation domain in the middle and at the C-terminus, respectively) are required to contact transcriptional coactivators and basal transcriptional machinery components and thereby induce gene transactivation.</text>
</comment>
<reference key="1">
    <citation type="submission" date="2006-09" db="EMBL/GenBank/DDBJ databases">
        <title>Sequences and genetic variations of forty-four porcine coat color related genes.</title>
        <authorList>
            <person name="Okumura N."/>
            <person name="Matsumoto T."/>
            <person name="Hamasima N."/>
            <person name="Uenishi H."/>
            <person name="Ogawa T."/>
            <person name="Komatsuda A."/>
            <person name="Fukudome N."/>
            <person name="Ide H."/>
            <person name="Suzuki A."/>
            <person name="Kojima C."/>
            <person name="Awata T."/>
        </authorList>
    </citation>
    <scope>NUCLEOTIDE SEQUENCE [MRNA]</scope>
</reference>
<feature type="chain" id="PRO_0000296389" description="Transcription factor SOX-10">
    <location>
        <begin position="1"/>
        <end position="469"/>
    </location>
</feature>
<feature type="DNA-binding region" description="HMG box" evidence="5">
    <location>
        <begin position="107"/>
        <end position="175"/>
    </location>
</feature>
<feature type="region of interest" description="Disordered" evidence="6">
    <location>
        <begin position="1"/>
        <end position="70"/>
    </location>
</feature>
<feature type="region of interest" description="Dimerization (DIM)" evidence="3">
    <location>
        <begin position="65"/>
        <end position="105"/>
    </location>
</feature>
<feature type="region of interest" description="Disordered" evidence="6">
    <location>
        <begin position="163"/>
        <end position="203"/>
    </location>
</feature>
<feature type="region of interest" description="Disordered" evidence="6">
    <location>
        <begin position="215"/>
        <end position="278"/>
    </location>
</feature>
<feature type="region of interest" description="Transactivation domain (TAM)" evidence="3">
    <location>
        <begin position="231"/>
        <end position="313"/>
    </location>
</feature>
<feature type="region of interest" description="Transactivation domain (TAC)" evidence="3">
    <location>
        <begin position="356"/>
        <end position="469"/>
    </location>
</feature>
<feature type="region of interest" description="Disordered" evidence="6">
    <location>
        <begin position="357"/>
        <end position="378"/>
    </location>
</feature>
<feature type="region of interest" description="Disordered" evidence="6">
    <location>
        <begin position="436"/>
        <end position="469"/>
    </location>
</feature>
<feature type="compositionally biased region" description="Low complexity" evidence="6">
    <location>
        <begin position="23"/>
        <end position="32"/>
    </location>
</feature>
<feature type="compositionally biased region" description="Gly residues" evidence="6">
    <location>
        <begin position="33"/>
        <end position="44"/>
    </location>
</feature>
<feature type="compositionally biased region" description="Basic and acidic residues" evidence="6">
    <location>
        <begin position="163"/>
        <end position="176"/>
    </location>
</feature>
<feature type="compositionally biased region" description="Basic and acidic residues" evidence="6">
    <location>
        <begin position="257"/>
        <end position="274"/>
    </location>
</feature>
<feature type="compositionally biased region" description="Polar residues" evidence="6">
    <location>
        <begin position="443"/>
        <end position="469"/>
    </location>
</feature>
<feature type="modified residue" description="Phosphoserine" evidence="3">
    <location>
        <position position="24"/>
    </location>
</feature>
<protein>
    <recommendedName>
        <fullName>Transcription factor SOX-10</fullName>
    </recommendedName>
</protein>
<organism>
    <name type="scientific">Sus scrofa</name>
    <name type="common">Pig</name>
    <dbReference type="NCBI Taxonomy" id="9823"/>
    <lineage>
        <taxon>Eukaryota</taxon>
        <taxon>Metazoa</taxon>
        <taxon>Chordata</taxon>
        <taxon>Craniata</taxon>
        <taxon>Vertebrata</taxon>
        <taxon>Euteleostomi</taxon>
        <taxon>Mammalia</taxon>
        <taxon>Eutheria</taxon>
        <taxon>Laurasiatheria</taxon>
        <taxon>Artiodactyla</taxon>
        <taxon>Suina</taxon>
        <taxon>Suidae</taxon>
        <taxon>Sus</taxon>
    </lineage>
</organism>
<accession>A5A763</accession>
<name>SOX10_PIG</name>
<gene>
    <name type="primary">SOX10</name>
</gene>
<evidence type="ECO:0000250" key="1">
    <source>
        <dbReference type="UniProtKB" id="O55170"/>
    </source>
</evidence>
<evidence type="ECO:0000250" key="2">
    <source>
        <dbReference type="UniProtKB" id="P48436"/>
    </source>
</evidence>
<evidence type="ECO:0000250" key="3">
    <source>
        <dbReference type="UniProtKB" id="P56693"/>
    </source>
</evidence>
<evidence type="ECO:0000250" key="4">
    <source>
        <dbReference type="UniProtKB" id="Q04888"/>
    </source>
</evidence>
<evidence type="ECO:0000255" key="5">
    <source>
        <dbReference type="PROSITE-ProRule" id="PRU00267"/>
    </source>
</evidence>
<evidence type="ECO:0000256" key="6">
    <source>
        <dbReference type="SAM" id="MobiDB-lite"/>
    </source>
</evidence>
<dbReference type="EMBL" id="AB271933">
    <property type="protein sequence ID" value="BAF62308.1"/>
    <property type="molecule type" value="mRNA"/>
</dbReference>
<dbReference type="RefSeq" id="NP_001093403.1">
    <property type="nucleotide sequence ID" value="NM_001099933.1"/>
</dbReference>
<dbReference type="SMR" id="A5A763"/>
<dbReference type="FunCoup" id="A5A763">
    <property type="interactions" value="296"/>
</dbReference>
<dbReference type="STRING" id="9823.ENSSSCP00000035739"/>
<dbReference type="PaxDb" id="9823-ENSSSCP00000000119"/>
<dbReference type="Ensembl" id="ENSSSCT00025040171.1">
    <property type="protein sequence ID" value="ENSSSCP00025017094.1"/>
    <property type="gene ID" value="ENSSSCG00025029557.1"/>
</dbReference>
<dbReference type="Ensembl" id="ENSSSCT00030004996.1">
    <property type="protein sequence ID" value="ENSSSCP00030001992.1"/>
    <property type="gene ID" value="ENSSSCG00030003836.1"/>
</dbReference>
<dbReference type="Ensembl" id="ENSSSCT00035012680.1">
    <property type="protein sequence ID" value="ENSSSCP00035004282.1"/>
    <property type="gene ID" value="ENSSSCG00035010141.1"/>
</dbReference>
<dbReference type="Ensembl" id="ENSSSCT00045001176.1">
    <property type="protein sequence ID" value="ENSSSCP00045000656.1"/>
    <property type="gene ID" value="ENSSSCG00045000796.1"/>
</dbReference>
<dbReference type="Ensembl" id="ENSSSCT00050090075.1">
    <property type="protein sequence ID" value="ENSSSCP00050038684.1"/>
    <property type="gene ID" value="ENSSSCG00050066118.1"/>
</dbReference>
<dbReference type="Ensembl" id="ENSSSCT00055032672.1">
    <property type="protein sequence ID" value="ENSSSCP00055026025.1"/>
    <property type="gene ID" value="ENSSSCG00055016514.1"/>
</dbReference>
<dbReference type="Ensembl" id="ENSSSCT00060046278.1">
    <property type="protein sequence ID" value="ENSSSCP00060019813.1"/>
    <property type="gene ID" value="ENSSSCG00060034119.1"/>
</dbReference>
<dbReference type="Ensembl" id="ENSSSCT00065040966.1">
    <property type="protein sequence ID" value="ENSSSCP00065017359.1"/>
    <property type="gene ID" value="ENSSSCG00065030336.1"/>
</dbReference>
<dbReference type="Ensembl" id="ENSSSCT00070049730.1">
    <property type="protein sequence ID" value="ENSSSCP00070041986.1"/>
    <property type="gene ID" value="ENSSSCG00070024810.1"/>
</dbReference>
<dbReference type="Ensembl" id="ENSSSCT00085037991">
    <property type="protein sequence ID" value="ENSSSCP00085026395"/>
    <property type="gene ID" value="ENSSSCG00085019938"/>
</dbReference>
<dbReference type="Ensembl" id="ENSSSCT00105076372">
    <property type="protein sequence ID" value="ENSSSCP00105054083"/>
    <property type="gene ID" value="ENSSSCG00105040046"/>
</dbReference>
<dbReference type="Ensembl" id="ENSSSCT00110059895">
    <property type="protein sequence ID" value="ENSSSCP00110041852"/>
    <property type="gene ID" value="ENSSSCG00110031360"/>
</dbReference>
<dbReference type="Ensembl" id="ENSSSCT00115018193">
    <property type="protein sequence ID" value="ENSSSCP00115017183"/>
    <property type="gene ID" value="ENSSSCG00115010570"/>
</dbReference>
<dbReference type="Ensembl" id="ENSSSCT00130033060">
    <property type="protein sequence ID" value="ENSSSCP00130022779"/>
    <property type="gene ID" value="ENSSSCG00130016826"/>
</dbReference>
<dbReference type="GeneID" id="414903"/>
<dbReference type="KEGG" id="ssc:414903"/>
<dbReference type="CTD" id="6663"/>
<dbReference type="eggNOG" id="KOG0527">
    <property type="taxonomic scope" value="Eukaryota"/>
</dbReference>
<dbReference type="InParanoid" id="A5A763"/>
<dbReference type="OrthoDB" id="6247875at2759"/>
<dbReference type="Reactome" id="R-SSC-9856649">
    <property type="pathway name" value="Transcriptional and post-translational regulation of MITF-M expression and activity"/>
</dbReference>
<dbReference type="Proteomes" id="UP000008227">
    <property type="component" value="Unplaced"/>
</dbReference>
<dbReference type="Proteomes" id="UP000314985">
    <property type="component" value="Chromosome 5"/>
</dbReference>
<dbReference type="Proteomes" id="UP000694570">
    <property type="component" value="Unplaced"/>
</dbReference>
<dbReference type="Proteomes" id="UP000694571">
    <property type="component" value="Unplaced"/>
</dbReference>
<dbReference type="Proteomes" id="UP000694720">
    <property type="component" value="Unplaced"/>
</dbReference>
<dbReference type="Proteomes" id="UP000694722">
    <property type="component" value="Unplaced"/>
</dbReference>
<dbReference type="Proteomes" id="UP000694723">
    <property type="component" value="Unplaced"/>
</dbReference>
<dbReference type="Proteomes" id="UP000694724">
    <property type="component" value="Unplaced"/>
</dbReference>
<dbReference type="Proteomes" id="UP000694725">
    <property type="component" value="Unplaced"/>
</dbReference>
<dbReference type="Proteomes" id="UP000694726">
    <property type="component" value="Unplaced"/>
</dbReference>
<dbReference type="Proteomes" id="UP000694727">
    <property type="component" value="Unplaced"/>
</dbReference>
<dbReference type="Proteomes" id="UP000694728">
    <property type="component" value="Unplaced"/>
</dbReference>
<dbReference type="GO" id="GO:0005741">
    <property type="term" value="C:mitochondrial outer membrane"/>
    <property type="evidence" value="ECO:0007669"/>
    <property type="project" value="UniProtKB-SubCell"/>
</dbReference>
<dbReference type="GO" id="GO:0005634">
    <property type="term" value="C:nucleus"/>
    <property type="evidence" value="ECO:0000250"/>
    <property type="project" value="UniProtKB"/>
</dbReference>
<dbReference type="GO" id="GO:0003677">
    <property type="term" value="F:DNA binding"/>
    <property type="evidence" value="ECO:0000250"/>
    <property type="project" value="UniProtKB"/>
</dbReference>
<dbReference type="GO" id="GO:0001216">
    <property type="term" value="F:DNA-binding transcription activator activity"/>
    <property type="evidence" value="ECO:0000250"/>
    <property type="project" value="UniProtKB"/>
</dbReference>
<dbReference type="GO" id="GO:0003700">
    <property type="term" value="F:DNA-binding transcription factor activity"/>
    <property type="evidence" value="ECO:0000250"/>
    <property type="project" value="UniProtKB"/>
</dbReference>
<dbReference type="GO" id="GO:0000981">
    <property type="term" value="F:DNA-binding transcription factor activity, RNA polymerase II-specific"/>
    <property type="evidence" value="ECO:0000318"/>
    <property type="project" value="GO_Central"/>
</dbReference>
<dbReference type="GO" id="GO:0000978">
    <property type="term" value="F:RNA polymerase II cis-regulatory region sequence-specific DNA binding"/>
    <property type="evidence" value="ECO:0000318"/>
    <property type="project" value="GO_Central"/>
</dbReference>
<dbReference type="GO" id="GO:0000976">
    <property type="term" value="F:transcription cis-regulatory region binding"/>
    <property type="evidence" value="ECO:0000250"/>
    <property type="project" value="UniProtKB"/>
</dbReference>
<dbReference type="GO" id="GO:0022010">
    <property type="term" value="P:central nervous system myelination"/>
    <property type="evidence" value="ECO:0000250"/>
    <property type="project" value="UniProtKB"/>
</dbReference>
<dbReference type="GO" id="GO:0048484">
    <property type="term" value="P:enteric nervous system development"/>
    <property type="evidence" value="ECO:0000318"/>
    <property type="project" value="GO_Central"/>
</dbReference>
<dbReference type="GO" id="GO:0002009">
    <property type="term" value="P:morphogenesis of an epithelium"/>
    <property type="evidence" value="ECO:0000318"/>
    <property type="project" value="GO_Central"/>
</dbReference>
<dbReference type="GO" id="GO:0000122">
    <property type="term" value="P:negative regulation of transcription by RNA polymerase II"/>
    <property type="evidence" value="ECO:0000318"/>
    <property type="project" value="GO_Central"/>
</dbReference>
<dbReference type="GO" id="GO:0001755">
    <property type="term" value="P:neural crest cell migration"/>
    <property type="evidence" value="ECO:0000318"/>
    <property type="project" value="GO_Central"/>
</dbReference>
<dbReference type="GO" id="GO:0014003">
    <property type="term" value="P:oligodendrocyte development"/>
    <property type="evidence" value="ECO:0000250"/>
    <property type="project" value="UniProtKB"/>
</dbReference>
<dbReference type="GO" id="GO:0048709">
    <property type="term" value="P:oligodendrocyte differentiation"/>
    <property type="evidence" value="ECO:0000250"/>
    <property type="project" value="UniProtKB"/>
</dbReference>
<dbReference type="GO" id="GO:0007422">
    <property type="term" value="P:peripheral nervous system development"/>
    <property type="evidence" value="ECO:0000318"/>
    <property type="project" value="GO_Central"/>
</dbReference>
<dbReference type="GO" id="GO:0045893">
    <property type="term" value="P:positive regulation of DNA-templated transcription"/>
    <property type="evidence" value="ECO:0000250"/>
    <property type="project" value="UniProtKB"/>
</dbReference>
<dbReference type="CDD" id="cd22031">
    <property type="entry name" value="HMG-box_SoxE"/>
    <property type="match status" value="1"/>
</dbReference>
<dbReference type="FunFam" id="1.10.30.10:FF:000004">
    <property type="entry name" value="Transcription factor SOX-10"/>
    <property type="match status" value="1"/>
</dbReference>
<dbReference type="Gene3D" id="1.10.30.10">
    <property type="entry name" value="High mobility group box domain"/>
    <property type="match status" value="1"/>
</dbReference>
<dbReference type="InterPro" id="IPR009071">
    <property type="entry name" value="HMG_box_dom"/>
</dbReference>
<dbReference type="InterPro" id="IPR036910">
    <property type="entry name" value="HMG_box_dom_sf"/>
</dbReference>
<dbReference type="InterPro" id="IPR022151">
    <property type="entry name" value="Sox_N"/>
</dbReference>
<dbReference type="InterPro" id="IPR050917">
    <property type="entry name" value="SOX_TF"/>
</dbReference>
<dbReference type="PANTHER" id="PTHR45803">
    <property type="entry name" value="SOX100B"/>
    <property type="match status" value="1"/>
</dbReference>
<dbReference type="PANTHER" id="PTHR45803:SF6">
    <property type="entry name" value="TRANSCRIPTION FACTOR SOX-10"/>
    <property type="match status" value="1"/>
</dbReference>
<dbReference type="Pfam" id="PF00505">
    <property type="entry name" value="HMG_box"/>
    <property type="match status" value="1"/>
</dbReference>
<dbReference type="Pfam" id="PF12444">
    <property type="entry name" value="Sox_N"/>
    <property type="match status" value="1"/>
</dbReference>
<dbReference type="SMART" id="SM00398">
    <property type="entry name" value="HMG"/>
    <property type="match status" value="1"/>
</dbReference>
<dbReference type="SUPFAM" id="SSF47095">
    <property type="entry name" value="HMG-box"/>
    <property type="match status" value="1"/>
</dbReference>
<dbReference type="PROSITE" id="PS50118">
    <property type="entry name" value="HMG_BOX_2"/>
    <property type="match status" value="1"/>
</dbReference>